<sequence length="273" mass="29595">MDQKFAVFGNPISHSKSPRIHTLFSEQTGIEHRYGKVLAPSEAFENTLVSFFADGAQGANITTPFKERAYDQCDELTDRASLAGAVNTIKRLEDGRLLGDNTDGIGLLSDLERQNLIRTTDHILLVGAGGAARGVILPLLSYGCTVVVTNRTHTRAQQLAKVFNHIGDIDVCEMSELAGQRFDLVINATASGLHGEVPNLPAAILTSQTRCYDMFYQAGTTPFLAWAQRLGLADYADGLGMLVGQAAHAFKLWHGVMPEITPVLAQLRSELGK</sequence>
<organism>
    <name type="scientific">Yersinia pestis (strain Pestoides F)</name>
    <dbReference type="NCBI Taxonomy" id="386656"/>
    <lineage>
        <taxon>Bacteria</taxon>
        <taxon>Pseudomonadati</taxon>
        <taxon>Pseudomonadota</taxon>
        <taxon>Gammaproteobacteria</taxon>
        <taxon>Enterobacterales</taxon>
        <taxon>Yersiniaceae</taxon>
        <taxon>Yersinia</taxon>
    </lineage>
</organism>
<reference key="1">
    <citation type="submission" date="2007-02" db="EMBL/GenBank/DDBJ databases">
        <title>Complete sequence of chromosome of Yersinia pestis Pestoides F.</title>
        <authorList>
            <consortium name="US DOE Joint Genome Institute"/>
            <person name="Copeland A."/>
            <person name="Lucas S."/>
            <person name="Lapidus A."/>
            <person name="Barry K."/>
            <person name="Detter J.C."/>
            <person name="Glavina del Rio T."/>
            <person name="Hammon N."/>
            <person name="Israni S."/>
            <person name="Dalin E."/>
            <person name="Tice H."/>
            <person name="Pitluck S."/>
            <person name="Di Bartolo G."/>
            <person name="Chain P."/>
            <person name="Malfatti S."/>
            <person name="Shin M."/>
            <person name="Vergez L."/>
            <person name="Schmutz J."/>
            <person name="Larimer F."/>
            <person name="Land M."/>
            <person name="Hauser L."/>
            <person name="Worsham P."/>
            <person name="Chu M."/>
            <person name="Bearden S."/>
            <person name="Garcia E."/>
            <person name="Richardson P."/>
        </authorList>
    </citation>
    <scope>NUCLEOTIDE SEQUENCE [LARGE SCALE GENOMIC DNA]</scope>
    <source>
        <strain>Pestoides F</strain>
    </source>
</reference>
<dbReference type="EC" id="1.1.1.25" evidence="1"/>
<dbReference type="EMBL" id="CP000668">
    <property type="protein sequence ID" value="ABP38591.1"/>
    <property type="molecule type" value="Genomic_DNA"/>
</dbReference>
<dbReference type="RefSeq" id="WP_002209026.1">
    <property type="nucleotide sequence ID" value="NZ_CP009715.1"/>
</dbReference>
<dbReference type="SMR" id="A4TH28"/>
<dbReference type="GeneID" id="57974357"/>
<dbReference type="KEGG" id="ypp:YPDSF_0169"/>
<dbReference type="PATRIC" id="fig|386656.14.peg.396"/>
<dbReference type="UniPathway" id="UPA00053">
    <property type="reaction ID" value="UER00087"/>
</dbReference>
<dbReference type="GO" id="GO:0005829">
    <property type="term" value="C:cytosol"/>
    <property type="evidence" value="ECO:0007669"/>
    <property type="project" value="TreeGrafter"/>
</dbReference>
<dbReference type="GO" id="GO:0050661">
    <property type="term" value="F:NADP binding"/>
    <property type="evidence" value="ECO:0007669"/>
    <property type="project" value="InterPro"/>
</dbReference>
<dbReference type="GO" id="GO:0004764">
    <property type="term" value="F:shikimate 3-dehydrogenase (NADP+) activity"/>
    <property type="evidence" value="ECO:0007669"/>
    <property type="project" value="UniProtKB-UniRule"/>
</dbReference>
<dbReference type="GO" id="GO:0008652">
    <property type="term" value="P:amino acid biosynthetic process"/>
    <property type="evidence" value="ECO:0007669"/>
    <property type="project" value="UniProtKB-KW"/>
</dbReference>
<dbReference type="GO" id="GO:0009073">
    <property type="term" value="P:aromatic amino acid family biosynthetic process"/>
    <property type="evidence" value="ECO:0007669"/>
    <property type="project" value="UniProtKB-KW"/>
</dbReference>
<dbReference type="GO" id="GO:0009423">
    <property type="term" value="P:chorismate biosynthetic process"/>
    <property type="evidence" value="ECO:0007669"/>
    <property type="project" value="UniProtKB-UniRule"/>
</dbReference>
<dbReference type="GO" id="GO:0019632">
    <property type="term" value="P:shikimate metabolic process"/>
    <property type="evidence" value="ECO:0007669"/>
    <property type="project" value="InterPro"/>
</dbReference>
<dbReference type="CDD" id="cd01065">
    <property type="entry name" value="NAD_bind_Shikimate_DH"/>
    <property type="match status" value="1"/>
</dbReference>
<dbReference type="FunFam" id="3.40.50.10860:FF:000006">
    <property type="entry name" value="Shikimate dehydrogenase (NADP(+))"/>
    <property type="match status" value="1"/>
</dbReference>
<dbReference type="FunFam" id="3.40.50.720:FF:000104">
    <property type="entry name" value="Shikimate dehydrogenase (NADP(+))"/>
    <property type="match status" value="1"/>
</dbReference>
<dbReference type="Gene3D" id="3.40.50.10860">
    <property type="entry name" value="Leucine Dehydrogenase, chain A, domain 1"/>
    <property type="match status" value="1"/>
</dbReference>
<dbReference type="Gene3D" id="3.40.50.720">
    <property type="entry name" value="NAD(P)-binding Rossmann-like Domain"/>
    <property type="match status" value="1"/>
</dbReference>
<dbReference type="HAMAP" id="MF_00222">
    <property type="entry name" value="Shikimate_DH_AroE"/>
    <property type="match status" value="1"/>
</dbReference>
<dbReference type="InterPro" id="IPR046346">
    <property type="entry name" value="Aminoacid_DH-like_N_sf"/>
</dbReference>
<dbReference type="InterPro" id="IPR036291">
    <property type="entry name" value="NAD(P)-bd_dom_sf"/>
</dbReference>
<dbReference type="InterPro" id="IPR041121">
    <property type="entry name" value="SDH_C"/>
</dbReference>
<dbReference type="InterPro" id="IPR011342">
    <property type="entry name" value="Shikimate_DH"/>
</dbReference>
<dbReference type="InterPro" id="IPR013708">
    <property type="entry name" value="Shikimate_DH-bd_N"/>
</dbReference>
<dbReference type="InterPro" id="IPR022893">
    <property type="entry name" value="Shikimate_DH_fam"/>
</dbReference>
<dbReference type="InterPro" id="IPR006151">
    <property type="entry name" value="Shikm_DH/Glu-tRNA_Rdtase"/>
</dbReference>
<dbReference type="NCBIfam" id="TIGR00507">
    <property type="entry name" value="aroE"/>
    <property type="match status" value="1"/>
</dbReference>
<dbReference type="NCBIfam" id="NF001310">
    <property type="entry name" value="PRK00258.1-2"/>
    <property type="match status" value="1"/>
</dbReference>
<dbReference type="PANTHER" id="PTHR21089:SF1">
    <property type="entry name" value="BIFUNCTIONAL 3-DEHYDROQUINATE DEHYDRATASE_SHIKIMATE DEHYDROGENASE, CHLOROPLASTIC"/>
    <property type="match status" value="1"/>
</dbReference>
<dbReference type="PANTHER" id="PTHR21089">
    <property type="entry name" value="SHIKIMATE DEHYDROGENASE"/>
    <property type="match status" value="1"/>
</dbReference>
<dbReference type="Pfam" id="PF18317">
    <property type="entry name" value="SDH_C"/>
    <property type="match status" value="1"/>
</dbReference>
<dbReference type="Pfam" id="PF01488">
    <property type="entry name" value="Shikimate_DH"/>
    <property type="match status" value="1"/>
</dbReference>
<dbReference type="Pfam" id="PF08501">
    <property type="entry name" value="Shikimate_dh_N"/>
    <property type="match status" value="1"/>
</dbReference>
<dbReference type="SUPFAM" id="SSF53223">
    <property type="entry name" value="Aminoacid dehydrogenase-like, N-terminal domain"/>
    <property type="match status" value="1"/>
</dbReference>
<dbReference type="SUPFAM" id="SSF51735">
    <property type="entry name" value="NAD(P)-binding Rossmann-fold domains"/>
    <property type="match status" value="1"/>
</dbReference>
<gene>
    <name evidence="1" type="primary">aroE</name>
    <name type="ordered locus">YPDSF_0169</name>
</gene>
<keyword id="KW-0028">Amino-acid biosynthesis</keyword>
<keyword id="KW-0057">Aromatic amino acid biosynthesis</keyword>
<keyword id="KW-0521">NADP</keyword>
<keyword id="KW-0560">Oxidoreductase</keyword>
<protein>
    <recommendedName>
        <fullName evidence="1">Shikimate dehydrogenase (NADP(+))</fullName>
        <shortName evidence="1">SDH</shortName>
        <ecNumber evidence="1">1.1.1.25</ecNumber>
    </recommendedName>
</protein>
<accession>A4TH28</accession>
<feature type="chain" id="PRO_1000021367" description="Shikimate dehydrogenase (NADP(+))">
    <location>
        <begin position="1"/>
        <end position="273"/>
    </location>
</feature>
<feature type="active site" description="Proton acceptor" evidence="1">
    <location>
        <position position="66"/>
    </location>
</feature>
<feature type="binding site" evidence="1">
    <location>
        <begin position="15"/>
        <end position="17"/>
    </location>
    <ligand>
        <name>shikimate</name>
        <dbReference type="ChEBI" id="CHEBI:36208"/>
    </ligand>
</feature>
<feature type="binding site" evidence="1">
    <location>
        <position position="62"/>
    </location>
    <ligand>
        <name>shikimate</name>
        <dbReference type="ChEBI" id="CHEBI:36208"/>
    </ligand>
</feature>
<feature type="binding site" evidence="1">
    <location>
        <position position="78"/>
    </location>
    <ligand>
        <name>NADP(+)</name>
        <dbReference type="ChEBI" id="CHEBI:58349"/>
    </ligand>
</feature>
<feature type="binding site" evidence="1">
    <location>
        <position position="87"/>
    </location>
    <ligand>
        <name>shikimate</name>
        <dbReference type="ChEBI" id="CHEBI:36208"/>
    </ligand>
</feature>
<feature type="binding site" evidence="1">
    <location>
        <position position="103"/>
    </location>
    <ligand>
        <name>shikimate</name>
        <dbReference type="ChEBI" id="CHEBI:36208"/>
    </ligand>
</feature>
<feature type="binding site" evidence="1">
    <location>
        <begin position="127"/>
        <end position="131"/>
    </location>
    <ligand>
        <name>NADP(+)</name>
        <dbReference type="ChEBI" id="CHEBI:58349"/>
    </ligand>
</feature>
<feature type="binding site" evidence="1">
    <location>
        <begin position="150"/>
        <end position="155"/>
    </location>
    <ligand>
        <name>NADP(+)</name>
        <dbReference type="ChEBI" id="CHEBI:58349"/>
    </ligand>
</feature>
<feature type="binding site" evidence="1">
    <location>
        <position position="218"/>
    </location>
    <ligand>
        <name>NADP(+)</name>
        <dbReference type="ChEBI" id="CHEBI:58349"/>
    </ligand>
</feature>
<feature type="binding site" evidence="1">
    <location>
        <position position="238"/>
    </location>
    <ligand>
        <name>NADP(+)</name>
        <dbReference type="ChEBI" id="CHEBI:58349"/>
    </ligand>
</feature>
<proteinExistence type="inferred from homology"/>
<name>AROE_YERPP</name>
<comment type="function">
    <text evidence="1">Involved in the biosynthesis of the chorismate, which leads to the biosynthesis of aromatic amino acids. Catalyzes the reversible NADPH linked reduction of 3-dehydroshikimate (DHSA) to yield shikimate (SA).</text>
</comment>
<comment type="catalytic activity">
    <reaction evidence="1">
        <text>shikimate + NADP(+) = 3-dehydroshikimate + NADPH + H(+)</text>
        <dbReference type="Rhea" id="RHEA:17737"/>
        <dbReference type="ChEBI" id="CHEBI:15378"/>
        <dbReference type="ChEBI" id="CHEBI:16630"/>
        <dbReference type="ChEBI" id="CHEBI:36208"/>
        <dbReference type="ChEBI" id="CHEBI:57783"/>
        <dbReference type="ChEBI" id="CHEBI:58349"/>
        <dbReference type="EC" id="1.1.1.25"/>
    </reaction>
</comment>
<comment type="pathway">
    <text evidence="1">Metabolic intermediate biosynthesis; chorismate biosynthesis; chorismate from D-erythrose 4-phosphate and phosphoenolpyruvate: step 4/7.</text>
</comment>
<comment type="subunit">
    <text evidence="1">Homodimer.</text>
</comment>
<comment type="similarity">
    <text evidence="1">Belongs to the shikimate dehydrogenase family.</text>
</comment>
<evidence type="ECO:0000255" key="1">
    <source>
        <dbReference type="HAMAP-Rule" id="MF_00222"/>
    </source>
</evidence>